<gene>
    <name type="primary">sda</name>
    <name type="ordered locus">BSU25690</name>
</gene>
<keyword id="KW-0002">3D-structure</keyword>
<keyword id="KW-0024">Alternative initiation</keyword>
<keyword id="KW-0649">Protein kinase inhibitor</keyword>
<keyword id="KW-1185">Reference proteome</keyword>
<keyword id="KW-0749">Sporulation</keyword>
<accession>Q7WY62</accession>
<evidence type="ECO:0000269" key="1">
    <source>
    </source>
</evidence>
<evidence type="ECO:0000269" key="2">
    <source>
    </source>
</evidence>
<evidence type="ECO:0000305" key="3"/>
<evidence type="ECO:0007829" key="4">
    <source>
        <dbReference type="PDB" id="1PV0"/>
    </source>
</evidence>
<evidence type="ECO:0007829" key="5">
    <source>
        <dbReference type="PDB" id="3FYR"/>
    </source>
</evidence>
<organism>
    <name type="scientific">Bacillus subtilis (strain 168)</name>
    <dbReference type="NCBI Taxonomy" id="224308"/>
    <lineage>
        <taxon>Bacteria</taxon>
        <taxon>Bacillati</taxon>
        <taxon>Bacillota</taxon>
        <taxon>Bacilli</taxon>
        <taxon>Bacillales</taxon>
        <taxon>Bacillaceae</taxon>
        <taxon>Bacillus</taxon>
    </lineage>
</organism>
<feature type="chain" id="PRO_0000022288" description="Sporulation inhibitor sda">
    <location>
        <begin position="1"/>
        <end position="52"/>
    </location>
</feature>
<feature type="site" description="Important for interaction with KinA" evidence="3">
    <location>
        <position position="25"/>
    </location>
</feature>
<feature type="site" description="Important for interaction with KinA" evidence="3">
    <location>
        <position position="27"/>
    </location>
</feature>
<feature type="site" description="Important for interaction with KinA" evidence="3">
    <location>
        <position position="31"/>
    </location>
</feature>
<feature type="splice variant" id="VSP_018790" description="In isoform 2." evidence="3">
    <location>
        <begin position="1"/>
        <end position="6"/>
    </location>
</feature>
<feature type="mutagenesis site" description="Partial loss of ability to inhibit KinA autophosphorylation." evidence="2">
    <original>M</original>
    <variation>A</variation>
    <variation>I</variation>
    <location>
        <position position="25"/>
    </location>
</feature>
<feature type="mutagenesis site" description="Complete loss of ability to inhibit KinA autophosphorylation." evidence="2">
    <original>L</original>
    <variation>A</variation>
    <variation>E</variation>
    <location>
        <position position="27"/>
    </location>
</feature>
<feature type="mutagenesis site" description="Complete loss of ability to inhibit KinA autophosphorylation." evidence="2">
    <original>F</original>
    <variation>H</variation>
    <location>
        <position position="31"/>
    </location>
</feature>
<feature type="mutagenesis site" description="Partial loss of ability to inhibit KinA autophosphorylation." evidence="2">
    <original>L</original>
    <variation>A</variation>
    <location>
        <position position="34"/>
    </location>
</feature>
<feature type="helix" evidence="5">
    <location>
        <begin position="12"/>
        <end position="24"/>
    </location>
</feature>
<feature type="helix" evidence="5">
    <location>
        <begin position="29"/>
        <end position="43"/>
    </location>
</feature>
<feature type="turn" evidence="4">
    <location>
        <begin position="45"/>
        <end position="49"/>
    </location>
</feature>
<dbReference type="EMBL" id="AL009126">
    <property type="protein sequence ID" value="CAE01463.1"/>
    <property type="molecule type" value="Genomic_DNA"/>
</dbReference>
<dbReference type="RefSeq" id="WP_010886571.1">
    <molecule id="Q7WY62-1"/>
    <property type="nucleotide sequence ID" value="NC_000964.3"/>
</dbReference>
<dbReference type="RefSeq" id="YP_054588.1">
    <molecule id="Q7WY62-1"/>
    <property type="nucleotide sequence ID" value="NC_000964.3"/>
</dbReference>
<dbReference type="PDB" id="1PV0">
    <property type="method" value="NMR"/>
    <property type="chains" value="A=7-52"/>
</dbReference>
<dbReference type="PDB" id="3FYR">
    <property type="method" value="X-ray"/>
    <property type="resolution" value="1.97 A"/>
    <property type="chains" value="A/B/C=7-52"/>
</dbReference>
<dbReference type="PDBsum" id="1PV0"/>
<dbReference type="PDBsum" id="3FYR"/>
<dbReference type="BMRB" id="Q7WY62"/>
<dbReference type="SASBDB" id="Q7WY62"/>
<dbReference type="SMR" id="Q7WY62"/>
<dbReference type="FunCoup" id="Q7WY62">
    <property type="interactions" value="26"/>
</dbReference>
<dbReference type="IntAct" id="Q7WY62">
    <property type="interactions" value="1"/>
</dbReference>
<dbReference type="STRING" id="224308.BSU25690"/>
<dbReference type="PaxDb" id="224308-BSU25690"/>
<dbReference type="EnsemblBacteria" id="CAE01463">
    <property type="protein sequence ID" value="CAE01463"/>
    <property type="gene ID" value="BSU_25690"/>
</dbReference>
<dbReference type="GeneID" id="2914223"/>
<dbReference type="KEGG" id="bsu:BSU25690"/>
<dbReference type="PATRIC" id="fig|224308.43.peg.2679"/>
<dbReference type="eggNOG" id="ENOG5033C8I">
    <property type="taxonomic scope" value="Bacteria"/>
</dbReference>
<dbReference type="InParanoid" id="Q7WY62"/>
<dbReference type="OrthoDB" id="2933732at2"/>
<dbReference type="BioCyc" id="BSUB:BSU25690-MONOMER"/>
<dbReference type="EvolutionaryTrace" id="Q7WY62"/>
<dbReference type="Proteomes" id="UP000001570">
    <property type="component" value="Chromosome"/>
</dbReference>
<dbReference type="GO" id="GO:0004860">
    <property type="term" value="F:protein kinase inhibitor activity"/>
    <property type="evidence" value="ECO:0007669"/>
    <property type="project" value="UniProtKB-KW"/>
</dbReference>
<dbReference type="GO" id="GO:0030435">
    <property type="term" value="P:sporulation resulting in formation of a cellular spore"/>
    <property type="evidence" value="ECO:0007669"/>
    <property type="project" value="UniProtKB-KW"/>
</dbReference>
<dbReference type="Gene3D" id="1.10.287.1100">
    <property type="entry name" value="Sporulation inhibitor A"/>
    <property type="match status" value="1"/>
</dbReference>
<dbReference type="InterPro" id="IPR015064">
    <property type="entry name" value="Sda"/>
</dbReference>
<dbReference type="InterPro" id="IPR036916">
    <property type="entry name" value="Sda_sf"/>
</dbReference>
<dbReference type="Pfam" id="PF08970">
    <property type="entry name" value="Sda"/>
    <property type="match status" value="1"/>
</dbReference>
<dbReference type="SUPFAM" id="SSF100985">
    <property type="entry name" value="Sporulation inhibitor Sda"/>
    <property type="match status" value="1"/>
</dbReference>
<protein>
    <recommendedName>
        <fullName>Sporulation inhibitor sda</fullName>
    </recommendedName>
    <alternativeName>
        <fullName>Histidine kinase KinA inhibitor</fullName>
    </alternativeName>
</protein>
<reference key="1">
    <citation type="journal article" date="1997" name="Nature">
        <title>The complete genome sequence of the Gram-positive bacterium Bacillus subtilis.</title>
        <authorList>
            <person name="Kunst F."/>
            <person name="Ogasawara N."/>
            <person name="Moszer I."/>
            <person name="Albertini A.M."/>
            <person name="Alloni G."/>
            <person name="Azevedo V."/>
            <person name="Bertero M.G."/>
            <person name="Bessieres P."/>
            <person name="Bolotin A."/>
            <person name="Borchert S."/>
            <person name="Borriss R."/>
            <person name="Boursier L."/>
            <person name="Brans A."/>
            <person name="Braun M."/>
            <person name="Brignell S.C."/>
            <person name="Bron S."/>
            <person name="Brouillet S."/>
            <person name="Bruschi C.V."/>
            <person name="Caldwell B."/>
            <person name="Capuano V."/>
            <person name="Carter N.M."/>
            <person name="Choi S.-K."/>
            <person name="Codani J.-J."/>
            <person name="Connerton I.F."/>
            <person name="Cummings N.J."/>
            <person name="Daniel R.A."/>
            <person name="Denizot F."/>
            <person name="Devine K.M."/>
            <person name="Duesterhoeft A."/>
            <person name="Ehrlich S.D."/>
            <person name="Emmerson P.T."/>
            <person name="Entian K.-D."/>
            <person name="Errington J."/>
            <person name="Fabret C."/>
            <person name="Ferrari E."/>
            <person name="Foulger D."/>
            <person name="Fritz C."/>
            <person name="Fujita M."/>
            <person name="Fujita Y."/>
            <person name="Fuma S."/>
            <person name="Galizzi A."/>
            <person name="Galleron N."/>
            <person name="Ghim S.-Y."/>
            <person name="Glaser P."/>
            <person name="Goffeau A."/>
            <person name="Golightly E.J."/>
            <person name="Grandi G."/>
            <person name="Guiseppi G."/>
            <person name="Guy B.J."/>
            <person name="Haga K."/>
            <person name="Haiech J."/>
            <person name="Harwood C.R."/>
            <person name="Henaut A."/>
            <person name="Hilbert H."/>
            <person name="Holsappel S."/>
            <person name="Hosono S."/>
            <person name="Hullo M.-F."/>
            <person name="Itaya M."/>
            <person name="Jones L.-M."/>
            <person name="Joris B."/>
            <person name="Karamata D."/>
            <person name="Kasahara Y."/>
            <person name="Klaerr-Blanchard M."/>
            <person name="Klein C."/>
            <person name="Kobayashi Y."/>
            <person name="Koetter P."/>
            <person name="Koningstein G."/>
            <person name="Krogh S."/>
            <person name="Kumano M."/>
            <person name="Kurita K."/>
            <person name="Lapidus A."/>
            <person name="Lardinois S."/>
            <person name="Lauber J."/>
            <person name="Lazarevic V."/>
            <person name="Lee S.-M."/>
            <person name="Levine A."/>
            <person name="Liu H."/>
            <person name="Masuda S."/>
            <person name="Mauel C."/>
            <person name="Medigue C."/>
            <person name="Medina N."/>
            <person name="Mellado R.P."/>
            <person name="Mizuno M."/>
            <person name="Moestl D."/>
            <person name="Nakai S."/>
            <person name="Noback M."/>
            <person name="Noone D."/>
            <person name="O'Reilly M."/>
            <person name="Ogawa K."/>
            <person name="Ogiwara A."/>
            <person name="Oudega B."/>
            <person name="Park S.-H."/>
            <person name="Parro V."/>
            <person name="Pohl T.M."/>
            <person name="Portetelle D."/>
            <person name="Porwollik S."/>
            <person name="Prescott A.M."/>
            <person name="Presecan E."/>
            <person name="Pujic P."/>
            <person name="Purnelle B."/>
            <person name="Rapoport G."/>
            <person name="Rey M."/>
            <person name="Reynolds S."/>
            <person name="Rieger M."/>
            <person name="Rivolta C."/>
            <person name="Rocha E."/>
            <person name="Roche B."/>
            <person name="Rose M."/>
            <person name="Sadaie Y."/>
            <person name="Sato T."/>
            <person name="Scanlan E."/>
            <person name="Schleich S."/>
            <person name="Schroeter R."/>
            <person name="Scoffone F."/>
            <person name="Sekiguchi J."/>
            <person name="Sekowska A."/>
            <person name="Seror S.J."/>
            <person name="Serror P."/>
            <person name="Shin B.-S."/>
            <person name="Soldo B."/>
            <person name="Sorokin A."/>
            <person name="Tacconi E."/>
            <person name="Takagi T."/>
            <person name="Takahashi H."/>
            <person name="Takemaru K."/>
            <person name="Takeuchi M."/>
            <person name="Tamakoshi A."/>
            <person name="Tanaka T."/>
            <person name="Terpstra P."/>
            <person name="Tognoni A."/>
            <person name="Tosato V."/>
            <person name="Uchiyama S."/>
            <person name="Vandenbol M."/>
            <person name="Vannier F."/>
            <person name="Vassarotti A."/>
            <person name="Viari A."/>
            <person name="Wambutt R."/>
            <person name="Wedler E."/>
            <person name="Wedler H."/>
            <person name="Weitzenegger T."/>
            <person name="Winters P."/>
            <person name="Wipat A."/>
            <person name="Yamamoto H."/>
            <person name="Yamane K."/>
            <person name="Yasumoto K."/>
            <person name="Yata K."/>
            <person name="Yoshida K."/>
            <person name="Yoshikawa H.-F."/>
            <person name="Zumstein E."/>
            <person name="Yoshikawa H."/>
            <person name="Danchin A."/>
        </authorList>
    </citation>
    <scope>NUCLEOTIDE SEQUENCE [LARGE SCALE GENOMIC DNA]</scope>
    <source>
        <strain>168</strain>
    </source>
</reference>
<reference key="2">
    <citation type="journal article" date="2001" name="Cell">
        <title>Replication initiation proteins regulate a developmental checkpoint in Bacillus subtilis.</title>
        <authorList>
            <person name="Burkholder W.F."/>
            <person name="Kurtser I."/>
            <person name="Grossman A.D."/>
        </authorList>
    </citation>
    <scope>IDENTIFICATION</scope>
    <scope>FUNCTION</scope>
    <source>
        <strain>168 / JH642</strain>
    </source>
</reference>
<reference key="3">
    <citation type="journal article" date="2004" name="Mol. Cell">
        <title>Structure and mechanism of action of Sda, an inhibitor of the histidine kinases that regulate initiation of sporulation in Bacillus subtilis.</title>
        <authorList>
            <person name="Rowland S.L."/>
            <person name="Burkholder W.F."/>
            <person name="Cunningham K.A."/>
            <person name="Maciejewski M.W."/>
            <person name="Grossman A.D."/>
            <person name="King G.F."/>
        </authorList>
    </citation>
    <scope>STRUCTURE BY NMR OF 7-52</scope>
    <scope>FUNCTION</scope>
    <scope>INTERACTION WITH KINA</scope>
    <scope>MUTAGENESIS OF MET-25; LEU-27; PHE-31 AND LEU-34</scope>
</reference>
<comment type="function">
    <text evidence="1 2">Mediates a developmental checkpoint inhibiting initiation of sporulation (by preventing phosphorylation of spo0A) in response to defects in the replication initiation machinery. Inhibits autophosphorylation of the histidine protein kinase KinA, forming a molecular barricade that prevents productive interaction between the ATP-binding site in the catalytic domain and the phosphorylatable His in the phosphotransfer domain of KinA. Probably also inhibits the activity of KinB, but has relatively little effect on KinC. Has at least one target in vivo in addition to KinA as sda does not require KinA to inhibit sporulation.</text>
</comment>
<comment type="subunit">
    <text>Forms a stable heterotetramer with KinA (comprising two molecules of each protein), by binding to the KinA dimerization/phosphotransfer domain.</text>
</comment>
<comment type="interaction">
    <interactant intactId="EBI-6405714">
        <id>Q7WY62</id>
    </interactant>
    <interactant intactId="EBI-6405707">
        <id>P16497</id>
        <label>kinA</label>
    </interactant>
    <organismsDiffer>false</organismsDiffer>
    <experiments>6</experiments>
</comment>
<comment type="alternative products">
    <event type="alternative initiation"/>
    <isoform>
        <id>Q7WY62-1</id>
        <name>1</name>
        <sequence type="displayed"/>
    </isoform>
    <isoform>
        <id>Q7WY62-2</id>
        <name>2</name>
        <sequence type="described" ref="VSP_018790"/>
    </isoform>
</comment>
<comment type="miscellaneous">
    <molecule>Isoform 2</molecule>
    <text evidence="3">Seems to be the major isoform.</text>
</comment>
<sequence length="52" mass="6155">MNWVPSMRKLSDELLIESYFKATEMNLNRDFIELIENEIKRRSLGHIISVSS</sequence>
<proteinExistence type="evidence at protein level"/>
<name>SDA_BACSU</name>